<feature type="chain" id="PRO_0000459352" description="Reverse gyrase subunit A">
    <location>
        <begin position="1"/>
        <end position="701"/>
    </location>
</feature>
<feature type="domain" description="Toprim" evidence="3">
    <location>
        <begin position="41"/>
        <end position="197"/>
    </location>
</feature>
<feature type="domain" description="Topo IA-type catalytic" evidence="5">
    <location>
        <begin position="213"/>
        <end position="602"/>
    </location>
</feature>
<feature type="zinc finger region" description="RG C-terminal-type" evidence="4">
    <location>
        <begin position="117"/>
        <end position="143"/>
    </location>
</feature>
<feature type="active site" description="O-(5'-phospho-DNA)-tyrosine intermediate" evidence="5">
    <location>
        <position position="352"/>
    </location>
</feature>
<feature type="binding site" evidence="3">
    <location>
        <position position="47"/>
    </location>
    <ligand>
        <name>Mg(2+)</name>
        <dbReference type="ChEBI" id="CHEBI:18420"/>
        <note>catalytic</note>
    </ligand>
</feature>
<feature type="binding site" evidence="1">
    <location>
        <position position="120"/>
    </location>
    <ligand>
        <name>Zn(2+)</name>
        <dbReference type="ChEBI" id="CHEBI:29105"/>
    </ligand>
</feature>
<feature type="binding site" evidence="1">
    <location>
        <position position="123"/>
    </location>
    <ligand>
        <name>Zn(2+)</name>
        <dbReference type="ChEBI" id="CHEBI:29105"/>
    </ligand>
</feature>
<feature type="binding site" evidence="1">
    <location>
        <position position="133"/>
    </location>
    <ligand>
        <name>Zn(2+)</name>
        <dbReference type="ChEBI" id="CHEBI:29105"/>
    </ligand>
</feature>
<feature type="binding site" evidence="1">
    <location>
        <position position="136"/>
    </location>
    <ligand>
        <name>Zn(2+)</name>
        <dbReference type="ChEBI" id="CHEBI:29105"/>
    </ligand>
</feature>
<feature type="binding site" evidence="3">
    <location>
        <position position="166"/>
    </location>
    <ligand>
        <name>Mg(2+)</name>
        <dbReference type="ChEBI" id="CHEBI:18420"/>
        <note>catalytic</note>
    </ligand>
</feature>
<keyword id="KW-0963">Cytoplasm</keyword>
<keyword id="KW-0238">DNA-binding</keyword>
<keyword id="KW-0413">Isomerase</keyword>
<keyword id="KW-0460">Magnesium</keyword>
<keyword id="KW-0479">Metal-binding</keyword>
<keyword id="KW-1185">Reference proteome</keyword>
<keyword id="KW-0799">Topoisomerase</keyword>
<keyword id="KW-0862">Zinc</keyword>
<keyword id="KW-0863">Zinc-finger</keyword>
<sequence length="701" mass="82331">MLRLEEIDLDTIKKELDEERKKVEEIMKGNIPTEIKDLIKMVLFIVESPNKARTIANFFGKPSVRRIGNIKAYETTTGKYILTIVATKGHLFELTLKEEGVYGVLKEKEYVPIFSPIKKCLDCGHQFVDEDKCPRCGSENIDDASDRIKVLRDLAQEADIVLIGTDPDAEGEKIAYDVYSIIRPYNKNIYRAEFHEVTRQAIIKALEEIRDINTNRVKAQLVRRIEDRWIGFALSQRLWSRFKKKTLSAGRVQTPVLGFIIKRYEEYKKNRAHYYAVKTSDFEVTFISDDPLEKYDKTIKIEKIEEKESEKKPLPPYTTDSLLRDAVIELRLSVDKIMALAQNLFEWGLITYHRTDSTHISNLGIQIAQTYIENTFGKEYFYPRHWGEEGTHEAIRPTKPIDTETLIKMLREGDIQIQGITKEHIRLYDLIFRRFIASQMKPFIAIETKFNAVWSNLNTTIEGITDIKENGWNLIKPIKLLAIKEGEYEVIDVKHWIGSKVPLYTQADVIELMKEQNIGRPSTYATIVKKLFERYYVIEKNQRLIPTERGIKVYQYLTERFGHLVDVKLTADLLEKMDRIENGELDYMDVLRSFKKELIEIWKTKETKYIADGIYKWKEYSVPAIVYERYEKILKRKKVYPEYLTPWSRAIYNALPLDNEIEKQTLALAIEKDFEILTKKPILREYKKKYEHLKNLVDQLL</sequence>
<name>RGYRA_NANEQ</name>
<evidence type="ECO:0000250" key="1">
    <source>
        <dbReference type="UniProtKB" id="O51934"/>
    </source>
</evidence>
<evidence type="ECO:0000250" key="2">
    <source>
        <dbReference type="UniProtKB" id="Q97ZZ8"/>
    </source>
</evidence>
<evidence type="ECO:0000255" key="3">
    <source>
        <dbReference type="PROSITE-ProRule" id="PRU00995"/>
    </source>
</evidence>
<evidence type="ECO:0000255" key="4">
    <source>
        <dbReference type="PROSITE-ProRule" id="PRU01381"/>
    </source>
</evidence>
<evidence type="ECO:0000255" key="5">
    <source>
        <dbReference type="PROSITE-ProRule" id="PRU01383"/>
    </source>
</evidence>
<evidence type="ECO:0000269" key="6">
    <source>
    </source>
</evidence>
<evidence type="ECO:0000303" key="7">
    <source>
    </source>
</evidence>
<evidence type="ECO:0000305" key="8"/>
<evidence type="ECO:0000305" key="9">
    <source>
    </source>
</evidence>
<evidence type="ECO:0000312" key="10">
    <source>
        <dbReference type="EMBL" id="AAR39166.1"/>
    </source>
</evidence>
<gene>
    <name evidence="8" type="primary">rgyA</name>
    <name evidence="10" type="ordered locus">NEQ318</name>
</gene>
<organism>
    <name type="scientific">Nanoarchaeum equitans (strain Kin4-M)</name>
    <dbReference type="NCBI Taxonomy" id="228908"/>
    <lineage>
        <taxon>Archaea</taxon>
        <taxon>Nanobdellota</taxon>
        <taxon>Candidatus Nanoarchaeia</taxon>
        <taxon>Nanoarchaeales</taxon>
        <taxon>Nanoarchaeaceae</taxon>
        <taxon>Nanoarchaeum</taxon>
    </lineage>
</organism>
<protein>
    <recommendedName>
        <fullName evidence="8">Reverse gyrase subunit A</fullName>
        <ecNumber evidence="6">5.6.2.-</ecNumber>
    </recommendedName>
    <alternativeName>
        <fullName evidence="7">Topoisomerase-like subunit of reverse gyrase</fullName>
    </alternativeName>
</protein>
<comment type="function">
    <text evidence="6 9">Modifies the topological state of DNA by introducing positive supercoils in an ATP-dependent process (PubMed:20929866). Binds to single-stranded DNA, transiently cleaves and then rejoins the end, introducing a positive supercoil in the process (PubMed:20929866). The scissile phosphodiester is attacked by the catalytic tyrosine of the enzyme, resulting in the formation of a DNA-(5'-phosphotyrosyl)-enzyme intermediate (PubMed:20929866). Probably involved in rewinding DNA strands in regions of the chromosome that have opened up to allow replication, transcription, DNA repair or for DNA protection (Probable) (PubMed:20929866). Reconstituted holoenzyme binds dsDNA a bit better than ssDNA, this subunit preferentially binds ssDNA (PubMed:20929866). In isolation this subunit relaxes negatively-supercoiled DNA, and stimulates the endogenous ATPase activity of the RgyB subunit (PubMed:20929866).</text>
</comment>
<comment type="cofactor">
    <cofactor evidence="1">
        <name>Zn(2+)</name>
        <dbReference type="ChEBI" id="CHEBI:29105"/>
    </cofactor>
    <text evidence="1">Binds 1 zinc ion per subunit.</text>
</comment>
<comment type="cofactor">
    <cofactor evidence="3">
        <name>Mg(2+)</name>
        <dbReference type="ChEBI" id="CHEBI:18420"/>
    </cofactor>
</comment>
<comment type="subunit">
    <text evidence="6">Heterodimer of an RgyA and RgyB subunit (PubMed:20929866).</text>
</comment>
<comment type="subcellular location">
    <subcellularLocation>
        <location evidence="2">Cytoplasm</location>
    </subcellularLocation>
</comment>
<comment type="domain">
    <text evidence="9">Introduction of positive supercoils requires the cooperation of both the helicase-like and topoisomerase domains of the 2 subunits. The helicase-like domain probably does not directly unwind DNA, but more likely acts by driving ATP-dependent conformational changes within the whole enzyme. A beta hairpin in the 'latch' region of the N-terminal domain plays a regulatory role in the enzyme, repressing topoisomerase activity in the absence of ATP and preventing the enzyme from acting as an ATP-independent relaxing enzyme; it also helps to coordinate nucleotide hydrolysis by the ATPase domain with the supercoiling activity of the topoisomerase domain (PubMed:20929866).</text>
</comment>
<comment type="miscellaneous">
    <text evidence="8">This enzyme is the only unique feature of hyperthermophilic bacteria/archaea known and seems to be essential for adaptation to life at high temperatures. It may play a role in stabilization of DNA at high temperatures.</text>
</comment>
<comment type="similarity">
    <text evidence="5">Belongs to the type IA topoisomerase family.</text>
</comment>
<dbReference type="EC" id="5.6.2.-" evidence="6"/>
<dbReference type="EMBL" id="AE017199">
    <property type="protein sequence ID" value="AAR39166.1"/>
    <property type="molecule type" value="Genomic_DNA"/>
</dbReference>
<dbReference type="SMR" id="Q74MA4"/>
<dbReference type="STRING" id="228908.NEQ318"/>
<dbReference type="EnsemblBacteria" id="AAR39166">
    <property type="protein sequence ID" value="AAR39166"/>
    <property type="gene ID" value="NEQ318"/>
</dbReference>
<dbReference type="KEGG" id="neq:NEQ318"/>
<dbReference type="PATRIC" id="fig|228908.8.peg.325"/>
<dbReference type="HOGENOM" id="CLU_393123_0_0_2"/>
<dbReference type="BioCyc" id="NEQU228908:GJB6-339-MONOMER"/>
<dbReference type="Proteomes" id="UP000000578">
    <property type="component" value="Chromosome"/>
</dbReference>
<dbReference type="GO" id="GO:0005737">
    <property type="term" value="C:cytoplasm"/>
    <property type="evidence" value="ECO:0007669"/>
    <property type="project" value="UniProtKB-SubCell"/>
</dbReference>
<dbReference type="GO" id="GO:0003677">
    <property type="term" value="F:DNA binding"/>
    <property type="evidence" value="ECO:0007669"/>
    <property type="project" value="UniProtKB-KW"/>
</dbReference>
<dbReference type="GO" id="GO:0003918">
    <property type="term" value="F:DNA topoisomerase type II (double strand cut, ATP-hydrolyzing) activity"/>
    <property type="evidence" value="ECO:0007669"/>
    <property type="project" value="UniProtKB-EC"/>
</dbReference>
<dbReference type="GO" id="GO:0160097">
    <property type="term" value="F:reverse gyrase activity"/>
    <property type="evidence" value="ECO:0000314"/>
    <property type="project" value="UniProtKB"/>
</dbReference>
<dbReference type="GO" id="GO:0008270">
    <property type="term" value="F:zinc ion binding"/>
    <property type="evidence" value="ECO:0007669"/>
    <property type="project" value="UniProtKB-KW"/>
</dbReference>
<dbReference type="GO" id="GO:0006265">
    <property type="term" value="P:DNA topological change"/>
    <property type="evidence" value="ECO:0000314"/>
    <property type="project" value="UniProtKB"/>
</dbReference>
<dbReference type="CDD" id="cd00186">
    <property type="entry name" value="TOP1Ac"/>
    <property type="match status" value="1"/>
</dbReference>
<dbReference type="CDD" id="cd03361">
    <property type="entry name" value="TOPRIM_TopoIA_RevGyr"/>
    <property type="match status" value="1"/>
</dbReference>
<dbReference type="Gene3D" id="2.60.510.20">
    <property type="match status" value="1"/>
</dbReference>
<dbReference type="Gene3D" id="3.40.50.140">
    <property type="match status" value="1"/>
</dbReference>
<dbReference type="Gene3D" id="1.10.460.10">
    <property type="entry name" value="Topoisomerase I, domain 2"/>
    <property type="match status" value="1"/>
</dbReference>
<dbReference type="Gene3D" id="1.10.290.10">
    <property type="entry name" value="Topoisomerase I, domain 4"/>
    <property type="match status" value="1"/>
</dbReference>
<dbReference type="InterPro" id="IPR005736">
    <property type="entry name" value="Reverse_gyrase"/>
</dbReference>
<dbReference type="InterPro" id="IPR003601">
    <property type="entry name" value="Topo_IA_2"/>
</dbReference>
<dbReference type="InterPro" id="IPR013497">
    <property type="entry name" value="Topo_IA_cen"/>
</dbReference>
<dbReference type="InterPro" id="IPR013824">
    <property type="entry name" value="Topo_IA_cen_sub1"/>
</dbReference>
<dbReference type="InterPro" id="IPR013826">
    <property type="entry name" value="Topo_IA_cen_sub3"/>
</dbReference>
<dbReference type="InterPro" id="IPR023405">
    <property type="entry name" value="Topo_IA_core_domain"/>
</dbReference>
<dbReference type="InterPro" id="IPR003602">
    <property type="entry name" value="Topo_IA_DNA-bd_dom"/>
</dbReference>
<dbReference type="InterPro" id="IPR006171">
    <property type="entry name" value="TOPRIM_dom"/>
</dbReference>
<dbReference type="InterPro" id="IPR034142">
    <property type="entry name" value="TOPRIM_RevGyr"/>
</dbReference>
<dbReference type="NCBIfam" id="TIGR01054">
    <property type="entry name" value="rgy"/>
    <property type="match status" value="1"/>
</dbReference>
<dbReference type="PANTHER" id="PTHR43505">
    <property type="entry name" value="REVERSE GYRASE"/>
    <property type="match status" value="1"/>
</dbReference>
<dbReference type="PANTHER" id="PTHR43505:SF1">
    <property type="entry name" value="REVERSE GYRASE"/>
    <property type="match status" value="1"/>
</dbReference>
<dbReference type="Pfam" id="PF01131">
    <property type="entry name" value="Topoisom_bac"/>
    <property type="match status" value="1"/>
</dbReference>
<dbReference type="Pfam" id="PF01751">
    <property type="entry name" value="Toprim"/>
    <property type="match status" value="1"/>
</dbReference>
<dbReference type="PRINTS" id="PR00417">
    <property type="entry name" value="PRTPISMRASEI"/>
</dbReference>
<dbReference type="SMART" id="SM00437">
    <property type="entry name" value="TOP1Ac"/>
    <property type="match status" value="1"/>
</dbReference>
<dbReference type="SMART" id="SM00436">
    <property type="entry name" value="TOP1Bc"/>
    <property type="match status" value="1"/>
</dbReference>
<dbReference type="SMART" id="SM00493">
    <property type="entry name" value="TOPRIM"/>
    <property type="match status" value="1"/>
</dbReference>
<dbReference type="SUPFAM" id="SSF56712">
    <property type="entry name" value="Prokaryotic type I DNA topoisomerase"/>
    <property type="match status" value="1"/>
</dbReference>
<dbReference type="PROSITE" id="PS52039">
    <property type="entry name" value="TOPO_IA_2"/>
    <property type="match status" value="1"/>
</dbReference>
<dbReference type="PROSITE" id="PS50880">
    <property type="entry name" value="TOPRIM"/>
    <property type="match status" value="1"/>
</dbReference>
<dbReference type="PROSITE" id="PS52037">
    <property type="entry name" value="ZF_RG_C"/>
    <property type="match status" value="1"/>
</dbReference>
<proteinExistence type="evidence at protein level"/>
<accession>Q74MA4</accession>
<reference evidence="10" key="1">
    <citation type="journal article" date="2003" name="Proc. Natl. Acad. Sci. U.S.A.">
        <title>The genome of Nanoarchaeum equitans: insights into early archaeal evolution and derived parasitism.</title>
        <authorList>
            <person name="Waters E."/>
            <person name="Hohn M.J."/>
            <person name="Ahel I."/>
            <person name="Graham D.E."/>
            <person name="Adams M.D."/>
            <person name="Barnstead M."/>
            <person name="Beeson K.Y."/>
            <person name="Bibbs L."/>
            <person name="Bolanos R."/>
            <person name="Keller M."/>
            <person name="Kretz K."/>
            <person name="Lin X."/>
            <person name="Mathur E."/>
            <person name="Ni J."/>
            <person name="Podar M."/>
            <person name="Richardson T."/>
            <person name="Sutton G.G."/>
            <person name="Simon M."/>
            <person name="Soell D."/>
            <person name="Stetter K.O."/>
            <person name="Short J.M."/>
            <person name="Noorderwier M."/>
        </authorList>
    </citation>
    <scope>NUCLEOTIDE SEQUENCE [LARGE SCALE GENOMIC DNA]</scope>
    <source>
        <strain>Kin4-M</strain>
    </source>
</reference>
<reference key="2">
    <citation type="journal article" date="2010" name="J. Biol. Chem.">
        <title>Separate and combined biochemical activities of the subunits of a naturally split reverse gyrase.</title>
        <authorList>
            <person name="Capp C."/>
            <person name="Qian Y."/>
            <person name="Sage H."/>
            <person name="Huber H."/>
            <person name="Hsieh T.S."/>
        </authorList>
    </citation>
    <scope>FUNCTION</scope>
    <scope>CATALYTIC ACTIVITY</scope>
    <scope>SUBUNIT</scope>
    <scope>DNA-BINDING</scope>
    <source>
        <strain>Kin4-M</strain>
    </source>
</reference>